<evidence type="ECO:0000250" key="1"/>
<evidence type="ECO:0000250" key="2">
    <source>
        <dbReference type="UniProtKB" id="P83851"/>
    </source>
</evidence>
<evidence type="ECO:0000250" key="3">
    <source>
        <dbReference type="UniProtKB" id="Q27546"/>
    </source>
</evidence>
<evidence type="ECO:0000305" key="4"/>
<dbReference type="EC" id="3.2.2.1" evidence="4"/>
<dbReference type="EC" id="3.2.2.8" evidence="4"/>
<dbReference type="EMBL" id="AAFI02000008">
    <property type="protein sequence ID" value="EAL71006.1"/>
    <property type="molecule type" value="Genomic_DNA"/>
</dbReference>
<dbReference type="RefSeq" id="XP_644984.1">
    <property type="nucleotide sequence ID" value="XM_639892.1"/>
</dbReference>
<dbReference type="SMR" id="Q7KWM9"/>
<dbReference type="FunCoup" id="Q7KWM9">
    <property type="interactions" value="2"/>
</dbReference>
<dbReference type="STRING" id="44689.Q7KWM9"/>
<dbReference type="PaxDb" id="44689-DDB0231227"/>
<dbReference type="EnsemblProtists" id="EAL71006">
    <property type="protein sequence ID" value="EAL71006"/>
    <property type="gene ID" value="DDB_G0272738"/>
</dbReference>
<dbReference type="GeneID" id="8618661"/>
<dbReference type="KEGG" id="ddi:DDB_G0272738"/>
<dbReference type="dictyBase" id="DDB_G0272738">
    <property type="gene designation" value="iunH"/>
</dbReference>
<dbReference type="VEuPathDB" id="AmoebaDB:DDB_G0272738"/>
<dbReference type="eggNOG" id="KOG2938">
    <property type="taxonomic scope" value="Eukaryota"/>
</dbReference>
<dbReference type="HOGENOM" id="CLU_036838_2_0_1"/>
<dbReference type="InParanoid" id="Q7KWM9"/>
<dbReference type="OMA" id="WVGVETK"/>
<dbReference type="PhylomeDB" id="Q7KWM9"/>
<dbReference type="UniPathway" id="UPA00606"/>
<dbReference type="PRO" id="PR:Q7KWM9"/>
<dbReference type="Proteomes" id="UP000002195">
    <property type="component" value="Chromosome 2"/>
</dbReference>
<dbReference type="GO" id="GO:0005829">
    <property type="term" value="C:cytosol"/>
    <property type="evidence" value="ECO:0000318"/>
    <property type="project" value="GO_Central"/>
</dbReference>
<dbReference type="GO" id="GO:0016798">
    <property type="term" value="F:hydrolase activity, acting on glycosyl bonds"/>
    <property type="evidence" value="ECO:0000250"/>
    <property type="project" value="dictyBase"/>
</dbReference>
<dbReference type="GO" id="GO:0046872">
    <property type="term" value="F:metal ion binding"/>
    <property type="evidence" value="ECO:0007669"/>
    <property type="project" value="UniProtKB-KW"/>
</dbReference>
<dbReference type="GO" id="GO:0008477">
    <property type="term" value="F:purine nucleosidase activity"/>
    <property type="evidence" value="ECO:0000318"/>
    <property type="project" value="GO_Central"/>
</dbReference>
<dbReference type="GO" id="GO:0050263">
    <property type="term" value="F:ribosylpyrimidine nucleosidase activity"/>
    <property type="evidence" value="ECO:0007669"/>
    <property type="project" value="UniProtKB-EC"/>
</dbReference>
<dbReference type="GO" id="GO:0009117">
    <property type="term" value="P:nucleotide metabolic process"/>
    <property type="evidence" value="ECO:0007669"/>
    <property type="project" value="UniProtKB-KW"/>
</dbReference>
<dbReference type="GO" id="GO:0006152">
    <property type="term" value="P:purine nucleoside catabolic process"/>
    <property type="evidence" value="ECO:0000318"/>
    <property type="project" value="GO_Central"/>
</dbReference>
<dbReference type="GO" id="GO:0008655">
    <property type="term" value="P:pyrimidine-containing compound salvage"/>
    <property type="evidence" value="ECO:0000250"/>
    <property type="project" value="dictyBase"/>
</dbReference>
<dbReference type="GO" id="GO:0006218">
    <property type="term" value="P:uridine catabolic process"/>
    <property type="evidence" value="ECO:0000250"/>
    <property type="project" value="dictyBase"/>
</dbReference>
<dbReference type="CDD" id="cd02651">
    <property type="entry name" value="nuc_hydro_IU_UC_XIUA"/>
    <property type="match status" value="1"/>
</dbReference>
<dbReference type="FunFam" id="3.90.245.10:FF:000025">
    <property type="entry name" value="Probable ribonucleoside hydrolase"/>
    <property type="match status" value="1"/>
</dbReference>
<dbReference type="Gene3D" id="3.90.245.10">
    <property type="entry name" value="Ribonucleoside hydrolase-like"/>
    <property type="match status" value="1"/>
</dbReference>
<dbReference type="InterPro" id="IPR001910">
    <property type="entry name" value="Inosine/uridine_hydrolase_dom"/>
</dbReference>
<dbReference type="InterPro" id="IPR023186">
    <property type="entry name" value="IUNH"/>
</dbReference>
<dbReference type="InterPro" id="IPR036452">
    <property type="entry name" value="Ribo_hydro-like"/>
</dbReference>
<dbReference type="PANTHER" id="PTHR12304">
    <property type="entry name" value="INOSINE-URIDINE PREFERRING NUCLEOSIDE HYDROLASE"/>
    <property type="match status" value="1"/>
</dbReference>
<dbReference type="PANTHER" id="PTHR12304:SF4">
    <property type="entry name" value="URIDINE NUCLEOSIDASE"/>
    <property type="match status" value="1"/>
</dbReference>
<dbReference type="Pfam" id="PF01156">
    <property type="entry name" value="IU_nuc_hydro"/>
    <property type="match status" value="1"/>
</dbReference>
<dbReference type="SUPFAM" id="SSF53590">
    <property type="entry name" value="Nucleoside hydrolase"/>
    <property type="match status" value="1"/>
</dbReference>
<keyword id="KW-0106">Calcium</keyword>
<keyword id="KW-0326">Glycosidase</keyword>
<keyword id="KW-0378">Hydrolase</keyword>
<keyword id="KW-0479">Metal-binding</keyword>
<keyword id="KW-0546">Nucleotide metabolism</keyword>
<keyword id="KW-1185">Reference proteome</keyword>
<gene>
    <name type="primary">iunH</name>
    <name type="ORF">DDB_G0272738</name>
</gene>
<organism>
    <name type="scientific">Dictyostelium discoideum</name>
    <name type="common">Social amoeba</name>
    <dbReference type="NCBI Taxonomy" id="44689"/>
    <lineage>
        <taxon>Eukaryota</taxon>
        <taxon>Amoebozoa</taxon>
        <taxon>Evosea</taxon>
        <taxon>Eumycetozoa</taxon>
        <taxon>Dictyostelia</taxon>
        <taxon>Dictyosteliales</taxon>
        <taxon>Dictyosteliaceae</taxon>
        <taxon>Dictyostelium</taxon>
    </lineage>
</organism>
<comment type="function">
    <text evidence="4">Catalyzes the hydrolysis of the N-glycosidic bond of purine and/or pyrimidine nucleosides into ribose and the base.</text>
</comment>
<comment type="catalytic activity">
    <reaction evidence="4">
        <text>a purine D-ribonucleoside + H2O = a purine nucleobase + D-ribose</text>
        <dbReference type="Rhea" id="RHEA:23344"/>
        <dbReference type="ChEBI" id="CHEBI:15377"/>
        <dbReference type="ChEBI" id="CHEBI:26386"/>
        <dbReference type="ChEBI" id="CHEBI:47013"/>
        <dbReference type="ChEBI" id="CHEBI:142355"/>
        <dbReference type="EC" id="3.2.2.1"/>
    </reaction>
</comment>
<comment type="catalytic activity">
    <reaction evidence="4">
        <text>a pyrimidine ribonucleoside + H2O = a pyrimidine nucleobase + D-ribose</text>
        <dbReference type="Rhea" id="RHEA:56816"/>
        <dbReference type="ChEBI" id="CHEBI:15377"/>
        <dbReference type="ChEBI" id="CHEBI:26432"/>
        <dbReference type="ChEBI" id="CHEBI:47013"/>
        <dbReference type="ChEBI" id="CHEBI:141014"/>
        <dbReference type="EC" id="3.2.2.8"/>
    </reaction>
</comment>
<comment type="cofactor">
    <cofactor evidence="2">
        <name>Ca(2+)</name>
        <dbReference type="ChEBI" id="CHEBI:29108"/>
    </cofactor>
</comment>
<comment type="pathway">
    <text>Purine metabolism; purine nucleoside salvage.</text>
</comment>
<comment type="similarity">
    <text evidence="4">Belongs to the IUNH family.</text>
</comment>
<feature type="chain" id="PRO_0000328284" description="Probable ribonucleoside hydrolase">
    <location>
        <begin position="1"/>
        <end position="340"/>
    </location>
</feature>
<feature type="active site" description="Proton donor" evidence="3">
    <location>
        <position position="259"/>
    </location>
</feature>
<feature type="binding site" evidence="1">
    <location>
        <position position="14"/>
    </location>
    <ligand>
        <name>Ca(2+)</name>
        <dbReference type="ChEBI" id="CHEBI:29108"/>
    </ligand>
</feature>
<feature type="binding site" evidence="1">
    <location>
        <position position="18"/>
    </location>
    <ligand>
        <name>substrate</name>
    </ligand>
</feature>
<feature type="binding site" evidence="1">
    <location>
        <position position="19"/>
    </location>
    <ligand>
        <name>Ca(2+)</name>
        <dbReference type="ChEBI" id="CHEBI:29108"/>
    </ligand>
</feature>
<feature type="binding site" evidence="1">
    <location>
        <position position="139"/>
    </location>
    <ligand>
        <name>Ca(2+)</name>
        <dbReference type="ChEBI" id="CHEBI:29108"/>
    </ligand>
</feature>
<feature type="binding site" evidence="1">
    <location>
        <position position="172"/>
    </location>
    <ligand>
        <name>substrate</name>
    </ligand>
</feature>
<feature type="binding site" evidence="1">
    <location>
        <position position="178"/>
    </location>
    <ligand>
        <name>substrate</name>
    </ligand>
</feature>
<feature type="binding site" evidence="1">
    <location>
        <position position="180"/>
    </location>
    <ligand>
        <name>substrate</name>
    </ligand>
</feature>
<feature type="binding site" evidence="1">
    <location>
        <position position="260"/>
    </location>
    <ligand>
        <name>Ca(2+)</name>
        <dbReference type="ChEBI" id="CHEBI:29108"/>
    </ligand>
</feature>
<sequence length="340" mass="37993">MLNEELLPIWLDHDCGHDDAFAMLLAFHSKIFNILGISSVHGNQTVDKTTINALITLEIIGKSNCGYEVVKGVRSPMCRPEQVCSEIHGETGLDCPTAELPKPTQLPITDRPAIQVMFEKISKFYTDNQQKQKVIIVATGSLTNVALLFAVYPQIKPMVEVSLLGGSINFGNISPAAEYNILVDPEAAKVVFESGVKVIMVPLECSHKALVNEKILERISDIEKADGKQTQFIKIIKGLLLFFADNYKSTFDFDHPPLHDPLAVAYLIDPTIFKCKLMRVDIETSSHLCLGRTVVDLFSMSKLQKNVHVCTDINVDKFWDLMINAIDNCYNHLYKSNILK</sequence>
<reference key="1">
    <citation type="journal article" date="2002" name="Nature">
        <title>Sequence and analysis of chromosome 2 of Dictyostelium discoideum.</title>
        <authorList>
            <person name="Gloeckner G."/>
            <person name="Eichinger L."/>
            <person name="Szafranski K."/>
            <person name="Pachebat J.A."/>
            <person name="Bankier A.T."/>
            <person name="Dear P.H."/>
            <person name="Lehmann R."/>
            <person name="Baumgart C."/>
            <person name="Parra G."/>
            <person name="Abril J.F."/>
            <person name="Guigo R."/>
            <person name="Kumpf K."/>
            <person name="Tunggal B."/>
            <person name="Cox E.C."/>
            <person name="Quail M.A."/>
            <person name="Platzer M."/>
            <person name="Rosenthal A."/>
            <person name="Noegel A.A."/>
        </authorList>
    </citation>
    <scope>NUCLEOTIDE SEQUENCE [LARGE SCALE GENOMIC DNA]</scope>
    <source>
        <strain>AX4</strain>
    </source>
</reference>
<reference key="2">
    <citation type="journal article" date="2005" name="Nature">
        <title>The genome of the social amoeba Dictyostelium discoideum.</title>
        <authorList>
            <person name="Eichinger L."/>
            <person name="Pachebat J.A."/>
            <person name="Gloeckner G."/>
            <person name="Rajandream M.A."/>
            <person name="Sucgang R."/>
            <person name="Berriman M."/>
            <person name="Song J."/>
            <person name="Olsen R."/>
            <person name="Szafranski K."/>
            <person name="Xu Q."/>
            <person name="Tunggal B."/>
            <person name="Kummerfeld S."/>
            <person name="Madera M."/>
            <person name="Konfortov B.A."/>
            <person name="Rivero F."/>
            <person name="Bankier A.T."/>
            <person name="Lehmann R."/>
            <person name="Hamlin N."/>
            <person name="Davies R."/>
            <person name="Gaudet P."/>
            <person name="Fey P."/>
            <person name="Pilcher K."/>
            <person name="Chen G."/>
            <person name="Saunders D."/>
            <person name="Sodergren E.J."/>
            <person name="Davis P."/>
            <person name="Kerhornou A."/>
            <person name="Nie X."/>
            <person name="Hall N."/>
            <person name="Anjard C."/>
            <person name="Hemphill L."/>
            <person name="Bason N."/>
            <person name="Farbrother P."/>
            <person name="Desany B."/>
            <person name="Just E."/>
            <person name="Morio T."/>
            <person name="Rost R."/>
            <person name="Churcher C.M."/>
            <person name="Cooper J."/>
            <person name="Haydock S."/>
            <person name="van Driessche N."/>
            <person name="Cronin A."/>
            <person name="Goodhead I."/>
            <person name="Muzny D.M."/>
            <person name="Mourier T."/>
            <person name="Pain A."/>
            <person name="Lu M."/>
            <person name="Harper D."/>
            <person name="Lindsay R."/>
            <person name="Hauser H."/>
            <person name="James K.D."/>
            <person name="Quiles M."/>
            <person name="Madan Babu M."/>
            <person name="Saito T."/>
            <person name="Buchrieser C."/>
            <person name="Wardroper A."/>
            <person name="Felder M."/>
            <person name="Thangavelu M."/>
            <person name="Johnson D."/>
            <person name="Knights A."/>
            <person name="Loulseged H."/>
            <person name="Mungall K.L."/>
            <person name="Oliver K."/>
            <person name="Price C."/>
            <person name="Quail M.A."/>
            <person name="Urushihara H."/>
            <person name="Hernandez J."/>
            <person name="Rabbinowitsch E."/>
            <person name="Steffen D."/>
            <person name="Sanders M."/>
            <person name="Ma J."/>
            <person name="Kohara Y."/>
            <person name="Sharp S."/>
            <person name="Simmonds M.N."/>
            <person name="Spiegler S."/>
            <person name="Tivey A."/>
            <person name="Sugano S."/>
            <person name="White B."/>
            <person name="Walker D."/>
            <person name="Woodward J.R."/>
            <person name="Winckler T."/>
            <person name="Tanaka Y."/>
            <person name="Shaulsky G."/>
            <person name="Schleicher M."/>
            <person name="Weinstock G.M."/>
            <person name="Rosenthal A."/>
            <person name="Cox E.C."/>
            <person name="Chisholm R.L."/>
            <person name="Gibbs R.A."/>
            <person name="Loomis W.F."/>
            <person name="Platzer M."/>
            <person name="Kay R.R."/>
            <person name="Williams J.G."/>
            <person name="Dear P.H."/>
            <person name="Noegel A.A."/>
            <person name="Barrell B.G."/>
            <person name="Kuspa A."/>
        </authorList>
    </citation>
    <scope>NUCLEOTIDE SEQUENCE [LARGE SCALE GENOMIC DNA]</scope>
    <source>
        <strain>AX4</strain>
    </source>
</reference>
<name>RIH_DICDI</name>
<protein>
    <recommendedName>
        <fullName evidence="4">Probable ribonucleoside hydrolase</fullName>
        <ecNumber evidence="4">3.2.2.1</ecNumber>
        <ecNumber evidence="4">3.2.2.8</ecNumber>
    </recommendedName>
</protein>
<accession>Q7KWM9</accession>
<accession>Q558T2</accession>
<proteinExistence type="inferred from homology"/>